<comment type="subcellular location">
    <subcellularLocation>
        <location evidence="2">Cell membrane</location>
        <topology evidence="2">Single-pass membrane protein</topology>
    </subcellularLocation>
</comment>
<comment type="sequence caution" evidence="2">
    <conflict type="frameshift">
        <sequence resource="EMBL-CDS" id="BAA33096"/>
    </conflict>
</comment>
<comment type="sequence caution" evidence="2">
    <conflict type="frameshift">
        <sequence resource="EMBL-CDS" id="BAA33097"/>
    </conflict>
</comment>
<name>YBDG_BACSU</name>
<reference key="1">
    <citation type="submission" date="1997-07" db="EMBL/GenBank/DDBJ databases">
        <title>Sequence analysis of the 70kb region between 17 and 23 degree of the Bacillus subtilis chromosome.</title>
        <authorList>
            <person name="Haga K."/>
            <person name="Liu H."/>
            <person name="Yasumoto K."/>
            <person name="Takahashi H."/>
            <person name="Yoshikawa H."/>
        </authorList>
    </citation>
    <scope>NUCLEOTIDE SEQUENCE [GENOMIC DNA]</scope>
    <source>
        <strain>168</strain>
    </source>
</reference>
<reference key="2">
    <citation type="journal article" date="1997" name="Nature">
        <title>The complete genome sequence of the Gram-positive bacterium Bacillus subtilis.</title>
        <authorList>
            <person name="Kunst F."/>
            <person name="Ogasawara N."/>
            <person name="Moszer I."/>
            <person name="Albertini A.M."/>
            <person name="Alloni G."/>
            <person name="Azevedo V."/>
            <person name="Bertero M.G."/>
            <person name="Bessieres P."/>
            <person name="Bolotin A."/>
            <person name="Borchert S."/>
            <person name="Borriss R."/>
            <person name="Boursier L."/>
            <person name="Brans A."/>
            <person name="Braun M."/>
            <person name="Brignell S.C."/>
            <person name="Bron S."/>
            <person name="Brouillet S."/>
            <person name="Bruschi C.V."/>
            <person name="Caldwell B."/>
            <person name="Capuano V."/>
            <person name="Carter N.M."/>
            <person name="Choi S.-K."/>
            <person name="Codani J.-J."/>
            <person name="Connerton I.F."/>
            <person name="Cummings N.J."/>
            <person name="Daniel R.A."/>
            <person name="Denizot F."/>
            <person name="Devine K.M."/>
            <person name="Duesterhoeft A."/>
            <person name="Ehrlich S.D."/>
            <person name="Emmerson P.T."/>
            <person name="Entian K.-D."/>
            <person name="Errington J."/>
            <person name="Fabret C."/>
            <person name="Ferrari E."/>
            <person name="Foulger D."/>
            <person name="Fritz C."/>
            <person name="Fujita M."/>
            <person name="Fujita Y."/>
            <person name="Fuma S."/>
            <person name="Galizzi A."/>
            <person name="Galleron N."/>
            <person name="Ghim S.-Y."/>
            <person name="Glaser P."/>
            <person name="Goffeau A."/>
            <person name="Golightly E.J."/>
            <person name="Grandi G."/>
            <person name="Guiseppi G."/>
            <person name="Guy B.J."/>
            <person name="Haga K."/>
            <person name="Haiech J."/>
            <person name="Harwood C.R."/>
            <person name="Henaut A."/>
            <person name="Hilbert H."/>
            <person name="Holsappel S."/>
            <person name="Hosono S."/>
            <person name="Hullo M.-F."/>
            <person name="Itaya M."/>
            <person name="Jones L.-M."/>
            <person name="Joris B."/>
            <person name="Karamata D."/>
            <person name="Kasahara Y."/>
            <person name="Klaerr-Blanchard M."/>
            <person name="Klein C."/>
            <person name="Kobayashi Y."/>
            <person name="Koetter P."/>
            <person name="Koningstein G."/>
            <person name="Krogh S."/>
            <person name="Kumano M."/>
            <person name="Kurita K."/>
            <person name="Lapidus A."/>
            <person name="Lardinois S."/>
            <person name="Lauber J."/>
            <person name="Lazarevic V."/>
            <person name="Lee S.-M."/>
            <person name="Levine A."/>
            <person name="Liu H."/>
            <person name="Masuda S."/>
            <person name="Mauel C."/>
            <person name="Medigue C."/>
            <person name="Medina N."/>
            <person name="Mellado R.P."/>
            <person name="Mizuno M."/>
            <person name="Moestl D."/>
            <person name="Nakai S."/>
            <person name="Noback M."/>
            <person name="Noone D."/>
            <person name="O'Reilly M."/>
            <person name="Ogawa K."/>
            <person name="Ogiwara A."/>
            <person name="Oudega B."/>
            <person name="Park S.-H."/>
            <person name="Parro V."/>
            <person name="Pohl T.M."/>
            <person name="Portetelle D."/>
            <person name="Porwollik S."/>
            <person name="Prescott A.M."/>
            <person name="Presecan E."/>
            <person name="Pujic P."/>
            <person name="Purnelle B."/>
            <person name="Rapoport G."/>
            <person name="Rey M."/>
            <person name="Reynolds S."/>
            <person name="Rieger M."/>
            <person name="Rivolta C."/>
            <person name="Rocha E."/>
            <person name="Roche B."/>
            <person name="Rose M."/>
            <person name="Sadaie Y."/>
            <person name="Sato T."/>
            <person name="Scanlan E."/>
            <person name="Schleich S."/>
            <person name="Schroeter R."/>
            <person name="Scoffone F."/>
            <person name="Sekiguchi J."/>
            <person name="Sekowska A."/>
            <person name="Seror S.J."/>
            <person name="Serror P."/>
            <person name="Shin B.-S."/>
            <person name="Soldo B."/>
            <person name="Sorokin A."/>
            <person name="Tacconi E."/>
            <person name="Takagi T."/>
            <person name="Takahashi H."/>
            <person name="Takemaru K."/>
            <person name="Takeuchi M."/>
            <person name="Tamakoshi A."/>
            <person name="Tanaka T."/>
            <person name="Terpstra P."/>
            <person name="Tognoni A."/>
            <person name="Tosato V."/>
            <person name="Uchiyama S."/>
            <person name="Vandenbol M."/>
            <person name="Vannier F."/>
            <person name="Vassarotti A."/>
            <person name="Viari A."/>
            <person name="Wambutt R."/>
            <person name="Wedler E."/>
            <person name="Wedler H."/>
            <person name="Weitzenegger T."/>
            <person name="Winters P."/>
            <person name="Wipat A."/>
            <person name="Yamamoto H."/>
            <person name="Yamane K."/>
            <person name="Yasumoto K."/>
            <person name="Yata K."/>
            <person name="Yoshida K."/>
            <person name="Yoshikawa H.-F."/>
            <person name="Zumstein E."/>
            <person name="Yoshikawa H."/>
            <person name="Danchin A."/>
        </authorList>
    </citation>
    <scope>NUCLEOTIDE SEQUENCE [LARGE SCALE GENOMIC DNA]</scope>
    <source>
        <strain>168</strain>
    </source>
</reference>
<reference key="3">
    <citation type="journal article" date="2009" name="Microbiology">
        <title>From a consortium sequence to a unified sequence: the Bacillus subtilis 168 reference genome a decade later.</title>
        <authorList>
            <person name="Barbe V."/>
            <person name="Cruveiller S."/>
            <person name="Kunst F."/>
            <person name="Lenoble P."/>
            <person name="Meurice G."/>
            <person name="Sekowska A."/>
            <person name="Vallenet D."/>
            <person name="Wang T."/>
            <person name="Moszer I."/>
            <person name="Medigue C."/>
            <person name="Danchin A."/>
        </authorList>
    </citation>
    <scope>SEQUENCE REVISION TO C-TERMINUS</scope>
</reference>
<protein>
    <recommendedName>
        <fullName>Uncharacterized protein YbdG</fullName>
    </recommendedName>
</protein>
<organism>
    <name type="scientific">Bacillus subtilis (strain 168)</name>
    <dbReference type="NCBI Taxonomy" id="224308"/>
    <lineage>
        <taxon>Bacteria</taxon>
        <taxon>Bacillati</taxon>
        <taxon>Bacillota</taxon>
        <taxon>Bacilli</taxon>
        <taxon>Bacillales</taxon>
        <taxon>Bacillaceae</taxon>
        <taxon>Bacillus</taxon>
    </lineage>
</organism>
<keyword id="KW-1003">Cell membrane</keyword>
<keyword id="KW-0472">Membrane</keyword>
<keyword id="KW-1185">Reference proteome</keyword>
<keyword id="KW-0812">Transmembrane</keyword>
<keyword id="KW-1133">Transmembrane helix</keyword>
<accession>O31431</accession>
<accession>Q9R9J7</accession>
<accession>Q9R9J8</accession>
<evidence type="ECO:0000255" key="1"/>
<evidence type="ECO:0000305" key="2"/>
<feature type="chain" id="PRO_0000360731" description="Uncharacterized protein YbdG">
    <location>
        <begin position="1"/>
        <end position="325"/>
    </location>
</feature>
<feature type="transmembrane region" description="Helical" evidence="1">
    <location>
        <begin position="10"/>
        <end position="30"/>
    </location>
</feature>
<feature type="domain" description="AB hydrolase-1" evidence="1">
    <location>
        <begin position="94"/>
        <end position="166"/>
    </location>
</feature>
<gene>
    <name type="primary">ybdG</name>
    <name type="synonym">ybdH</name>
    <name type="ordered locus">BSU01990</name>
</gene>
<proteinExistence type="predicted"/>
<dbReference type="EMBL" id="AB006424">
    <property type="protein sequence ID" value="BAA33096.1"/>
    <property type="status" value="ALT_FRAME"/>
    <property type="molecule type" value="Genomic_DNA"/>
</dbReference>
<dbReference type="EMBL" id="AB006424">
    <property type="protein sequence ID" value="BAA33097.1"/>
    <property type="status" value="ALT_FRAME"/>
    <property type="molecule type" value="Genomic_DNA"/>
</dbReference>
<dbReference type="EMBL" id="AL009126">
    <property type="protein sequence ID" value="CAB11993.2"/>
    <property type="molecule type" value="Genomic_DNA"/>
</dbReference>
<dbReference type="PIR" id="D69747">
    <property type="entry name" value="D69747"/>
</dbReference>
<dbReference type="RefSeq" id="NP_388081.2">
    <property type="nucleotide sequence ID" value="NC_000964.3"/>
</dbReference>
<dbReference type="RefSeq" id="WP_003234896.1">
    <property type="nucleotide sequence ID" value="NZ_OZ025638.1"/>
</dbReference>
<dbReference type="SMR" id="O31431"/>
<dbReference type="FunCoup" id="O31431">
    <property type="interactions" value="26"/>
</dbReference>
<dbReference type="STRING" id="224308.BSU01990"/>
<dbReference type="ESTHER" id="bacsu-YBDG">
    <property type="family name" value="AlphaBeta_hydrolase"/>
</dbReference>
<dbReference type="PaxDb" id="224308-BSU01990"/>
<dbReference type="EnsemblBacteria" id="CAB11993">
    <property type="protein sequence ID" value="CAB11993"/>
    <property type="gene ID" value="BSU_01990"/>
</dbReference>
<dbReference type="GeneID" id="938500"/>
<dbReference type="KEGG" id="bsu:BSU01990"/>
<dbReference type="PATRIC" id="fig|224308.179.peg.205"/>
<dbReference type="eggNOG" id="COG0596">
    <property type="taxonomic scope" value="Bacteria"/>
</dbReference>
<dbReference type="InParanoid" id="O31431"/>
<dbReference type="OrthoDB" id="1817159at2"/>
<dbReference type="BioCyc" id="BSUB:BSU01990-MONOMER"/>
<dbReference type="Proteomes" id="UP000001570">
    <property type="component" value="Chromosome"/>
</dbReference>
<dbReference type="GO" id="GO:0005886">
    <property type="term" value="C:plasma membrane"/>
    <property type="evidence" value="ECO:0007669"/>
    <property type="project" value="UniProtKB-SubCell"/>
</dbReference>
<dbReference type="Gene3D" id="3.40.50.1820">
    <property type="entry name" value="alpha/beta hydrolase"/>
    <property type="match status" value="1"/>
</dbReference>
<dbReference type="InterPro" id="IPR000073">
    <property type="entry name" value="AB_hydrolase_1"/>
</dbReference>
<dbReference type="InterPro" id="IPR029058">
    <property type="entry name" value="AB_hydrolase_fold"/>
</dbReference>
<dbReference type="Pfam" id="PF00561">
    <property type="entry name" value="Abhydrolase_1"/>
    <property type="match status" value="1"/>
</dbReference>
<dbReference type="SUPFAM" id="SSF53474">
    <property type="entry name" value="alpha/beta-Hydrolases"/>
    <property type="match status" value="1"/>
</dbReference>
<sequence>MKTLWKVLKIVFVSLAALVLLVSVSVFIYHHFQLNKEAALLKGKGTVVDVDGKKMNVYQEGSGKDTFVFMSGSGIAAPAYEMKGLYSKFSKENKIAVVDRAGYGYSEVSHDDRDIDTVLEQTRKALMKSGNKPPYILMPHSISGIEAMYWAQKYPKEIKAIIAMDIGLPQQYVTYKLSGVDRLKVRGFHLLTSIGFHRFIPSAVYNPEVIRQSFLTDEEKEIYKAINFKQFFNADMEHELLQSYQNGSKSVNLPAPKETPVLILDAVSDQNRHSKYAIQNRKDYEAFAAQFNTADIKELRGTHSIYLYQPDQIYKLSMEFMRKVR</sequence>